<dbReference type="EMBL" id="CP000034">
    <property type="protein sequence ID" value="ABB64472.1"/>
    <property type="status" value="ALT_INIT"/>
    <property type="molecule type" value="Genomic_DNA"/>
</dbReference>
<dbReference type="RefSeq" id="WP_000538187.1">
    <property type="nucleotide sequence ID" value="NC_007606.1"/>
</dbReference>
<dbReference type="RefSeq" id="YP_405963.2">
    <property type="nucleotide sequence ID" value="NC_007606.1"/>
</dbReference>
<dbReference type="STRING" id="300267.SDY_4617"/>
<dbReference type="EnsemblBacteria" id="ABB64472">
    <property type="protein sequence ID" value="ABB64472"/>
    <property type="gene ID" value="SDY_4617"/>
</dbReference>
<dbReference type="KEGG" id="sdy:SDY_4617"/>
<dbReference type="PATRIC" id="fig|300267.13.peg.5472"/>
<dbReference type="HOGENOM" id="CLU_117642_1_0_6"/>
<dbReference type="Proteomes" id="UP000002716">
    <property type="component" value="Chromosome"/>
</dbReference>
<dbReference type="GO" id="GO:0005886">
    <property type="term" value="C:plasma membrane"/>
    <property type="evidence" value="ECO:0007669"/>
    <property type="project" value="UniProtKB-SubCell"/>
</dbReference>
<dbReference type="GO" id="GO:0015744">
    <property type="term" value="P:succinate transport"/>
    <property type="evidence" value="ECO:0007669"/>
    <property type="project" value="UniProtKB-UniRule"/>
</dbReference>
<dbReference type="HAMAP" id="MF_01191">
    <property type="entry name" value="YjjB"/>
    <property type="match status" value="1"/>
</dbReference>
<dbReference type="InterPro" id="IPR024528">
    <property type="entry name" value="ThrE_2"/>
</dbReference>
<dbReference type="InterPro" id="IPR050539">
    <property type="entry name" value="ThrE_Dicarb/AminoAcid_Exp"/>
</dbReference>
<dbReference type="InterPro" id="IPR020914">
    <property type="entry name" value="YjjB"/>
</dbReference>
<dbReference type="NCBIfam" id="NF007391">
    <property type="entry name" value="PRK09917.1"/>
    <property type="match status" value="1"/>
</dbReference>
<dbReference type="PANTHER" id="PTHR34390:SF1">
    <property type="entry name" value="SUCCINATE TRANSPORTER SUBUNIT YJJB-RELATED"/>
    <property type="match status" value="1"/>
</dbReference>
<dbReference type="PANTHER" id="PTHR34390">
    <property type="entry name" value="UPF0442 PROTEIN YJJB-RELATED"/>
    <property type="match status" value="1"/>
</dbReference>
<dbReference type="Pfam" id="PF12821">
    <property type="entry name" value="ThrE_2"/>
    <property type="match status" value="1"/>
</dbReference>
<name>YJJB_SHIDS</name>
<evidence type="ECO:0000255" key="1">
    <source>
        <dbReference type="HAMAP-Rule" id="MF_01191"/>
    </source>
</evidence>
<evidence type="ECO:0000305" key="2"/>
<organism>
    <name type="scientific">Shigella dysenteriae serotype 1 (strain Sd197)</name>
    <dbReference type="NCBI Taxonomy" id="300267"/>
    <lineage>
        <taxon>Bacteria</taxon>
        <taxon>Pseudomonadati</taxon>
        <taxon>Pseudomonadota</taxon>
        <taxon>Gammaproteobacteria</taxon>
        <taxon>Enterobacterales</taxon>
        <taxon>Enterobacteriaceae</taxon>
        <taxon>Shigella</taxon>
    </lineage>
</organism>
<proteinExistence type="inferred from homology"/>
<protein>
    <recommendedName>
        <fullName evidence="1">Probable succinate transporter subunit YjjB</fullName>
    </recommendedName>
</protein>
<accession>Q327N3</accession>
<comment type="function">
    <text evidence="1">Involved in succinate export with YjjP. Both proteins are required for export.</text>
</comment>
<comment type="subunit">
    <text evidence="1">The transporter is composed of YjjB and YjjP.</text>
</comment>
<comment type="subcellular location">
    <subcellularLocation>
        <location evidence="1">Cell inner membrane</location>
        <topology evidence="1">Multi-pass membrane protein</topology>
    </subcellularLocation>
</comment>
<comment type="similarity">
    <text evidence="1">Belongs to the ThrE exporter (TC 2.A.79) family.</text>
</comment>
<comment type="sequence caution" evidence="2">
    <conflict type="erroneous initiation">
        <sequence resource="EMBL-CDS" id="ABB64472"/>
    </conflict>
</comment>
<sequence length="157" mass="17063">MGVIEFLLALAQDMILAAIPAVGFAMVFNVPVQALRWCALLGSIGHGSRMILMTSGLNIEWSTFMASMLVGTIGIQWSRWYLAHPKVFTVAAVIPMFPGISAYTAMISAVKISQLGYSEPLMITLLTNFLTASSIVGALSVDLSIPGLWLYRKRPRV</sequence>
<reference key="1">
    <citation type="journal article" date="2005" name="Nucleic Acids Res.">
        <title>Genome dynamics and diversity of Shigella species, the etiologic agents of bacillary dysentery.</title>
        <authorList>
            <person name="Yang F."/>
            <person name="Yang J."/>
            <person name="Zhang X."/>
            <person name="Chen L."/>
            <person name="Jiang Y."/>
            <person name="Yan Y."/>
            <person name="Tang X."/>
            <person name="Wang J."/>
            <person name="Xiong Z."/>
            <person name="Dong J."/>
            <person name="Xue Y."/>
            <person name="Zhu Y."/>
            <person name="Xu X."/>
            <person name="Sun L."/>
            <person name="Chen S."/>
            <person name="Nie H."/>
            <person name="Peng J."/>
            <person name="Xu J."/>
            <person name="Wang Y."/>
            <person name="Yuan Z."/>
            <person name="Wen Y."/>
            <person name="Yao Z."/>
            <person name="Shen Y."/>
            <person name="Qiang B."/>
            <person name="Hou Y."/>
            <person name="Yu J."/>
            <person name="Jin Q."/>
        </authorList>
    </citation>
    <scope>NUCLEOTIDE SEQUENCE [LARGE SCALE GENOMIC DNA]</scope>
    <source>
        <strain>Sd197</strain>
    </source>
</reference>
<keyword id="KW-0997">Cell inner membrane</keyword>
<keyword id="KW-1003">Cell membrane</keyword>
<keyword id="KW-0472">Membrane</keyword>
<keyword id="KW-1185">Reference proteome</keyword>
<keyword id="KW-0812">Transmembrane</keyword>
<keyword id="KW-1133">Transmembrane helix</keyword>
<keyword id="KW-0813">Transport</keyword>
<feature type="chain" id="PRO_0000293677" description="Probable succinate transporter subunit YjjB">
    <location>
        <begin position="1"/>
        <end position="157"/>
    </location>
</feature>
<feature type="transmembrane region" description="Helical" evidence="1">
    <location>
        <begin position="15"/>
        <end position="35"/>
    </location>
</feature>
<feature type="transmembrane region" description="Helical" evidence="1">
    <location>
        <begin position="50"/>
        <end position="70"/>
    </location>
</feature>
<feature type="transmembrane region" description="Helical" evidence="1">
    <location>
        <begin position="87"/>
        <end position="107"/>
    </location>
</feature>
<feature type="transmembrane region" description="Helical" evidence="1">
    <location>
        <begin position="121"/>
        <end position="141"/>
    </location>
</feature>
<gene>
    <name evidence="1" type="primary">yjjB</name>
    <name type="ordered locus">SDY_4617</name>
</gene>